<reference key="1">
    <citation type="submission" date="2007-03" db="EMBL/GenBank/DDBJ databases">
        <title>Sequencing analysis of Crucihimalaya wallichii chloroplast DNA.</title>
        <authorList>
            <person name="Hosouchi T."/>
            <person name="Tsuruoka H."/>
            <person name="Kotani H."/>
        </authorList>
    </citation>
    <scope>NUCLEOTIDE SEQUENCE [LARGE SCALE GENOMIC DNA]</scope>
</reference>
<gene>
    <name evidence="1" type="primary">rpoA</name>
</gene>
<evidence type="ECO:0000255" key="1">
    <source>
        <dbReference type="HAMAP-Rule" id="MF_00059"/>
    </source>
</evidence>
<proteinExistence type="inferred from homology"/>
<comment type="function">
    <text evidence="1">DNA-dependent RNA polymerase catalyzes the transcription of DNA into RNA using the four ribonucleoside triphosphates as substrates.</text>
</comment>
<comment type="catalytic activity">
    <reaction evidence="1">
        <text>RNA(n) + a ribonucleoside 5'-triphosphate = RNA(n+1) + diphosphate</text>
        <dbReference type="Rhea" id="RHEA:21248"/>
        <dbReference type="Rhea" id="RHEA-COMP:14527"/>
        <dbReference type="Rhea" id="RHEA-COMP:17342"/>
        <dbReference type="ChEBI" id="CHEBI:33019"/>
        <dbReference type="ChEBI" id="CHEBI:61557"/>
        <dbReference type="ChEBI" id="CHEBI:140395"/>
        <dbReference type="EC" id="2.7.7.6"/>
    </reaction>
</comment>
<comment type="subunit">
    <text evidence="1">In plastids the minimal PEP RNA polymerase catalytic core is composed of four subunits: alpha, beta, beta', and beta''. When a (nuclear-encoded) sigma factor is associated with the core the holoenzyme is formed, which can initiate transcription.</text>
</comment>
<comment type="subcellular location">
    <subcellularLocation>
        <location>Plastid</location>
        <location>Chloroplast</location>
    </subcellularLocation>
</comment>
<comment type="domain">
    <text evidence="1">The N-terminal domain is essential for RNAP assembly and basal transcription, whereas the C-terminal domain is involved in interaction with transcriptional regulators and with upstream promoter elements.</text>
</comment>
<comment type="similarity">
    <text evidence="1">Belongs to the RNA polymerase alpha chain family.</text>
</comment>
<feature type="chain" id="PRO_0000296890" description="DNA-directed RNA polymerase subunit alpha">
    <location>
        <begin position="1"/>
        <end position="327"/>
    </location>
</feature>
<feature type="region of interest" description="Alpha N-terminal domain (alpha-NTD)" evidence="1">
    <location>
        <begin position="1"/>
        <end position="233"/>
    </location>
</feature>
<feature type="region of interest" description="Alpha C-terminal domain (alpha-CTD)" evidence="1">
    <location>
        <begin position="267"/>
        <end position="327"/>
    </location>
</feature>
<sequence>MVREKVKVSTRTLQWKCVESRRDSKRLYYGRFILSPLMKGQADTIGIAMRRALLGEMEGTCITRVKSENIPHDYSNIVGIQESVHEILMNLNEIVLRSNLYGTRNALICVQGPGYITARDIILPPSVEIVDNTQHIATLTEPIDLCIGLKIERNRGYSLKISNNLEDRSYPIDAVFMPVQNANHSIHSYGNGNEKQEILFLEIWTNGSLTPKEALHEASRNLINLFIPFLHVEEETFYLENNQHQVTLPFFPFHNRFFNLRKKKKELAFQYIFIDQLELPPRIYNCLKKSNIHTLLDLLNNSQEDLIKIEHFHVEDVKKILDILEKK</sequence>
<name>RPOA_CRUWA</name>
<protein>
    <recommendedName>
        <fullName evidence="1">DNA-directed RNA polymerase subunit alpha</fullName>
        <shortName evidence="1">PEP</shortName>
        <ecNumber evidence="1">2.7.7.6</ecNumber>
    </recommendedName>
    <alternativeName>
        <fullName evidence="1">Plastid-encoded RNA polymerase subunit alpha</fullName>
        <shortName evidence="1">RNA polymerase subunit alpha</shortName>
    </alternativeName>
</protein>
<organism>
    <name type="scientific">Crucihimalaya wallichii</name>
    <name type="common">Rock-cress</name>
    <name type="synonym">Arabidopsis campestris</name>
    <dbReference type="NCBI Taxonomy" id="78192"/>
    <lineage>
        <taxon>Eukaryota</taxon>
        <taxon>Viridiplantae</taxon>
        <taxon>Streptophyta</taxon>
        <taxon>Embryophyta</taxon>
        <taxon>Tracheophyta</taxon>
        <taxon>Spermatophyta</taxon>
        <taxon>Magnoliopsida</taxon>
        <taxon>eudicotyledons</taxon>
        <taxon>Gunneridae</taxon>
        <taxon>Pentapetalae</taxon>
        <taxon>rosids</taxon>
        <taxon>malvids</taxon>
        <taxon>Brassicales</taxon>
        <taxon>Brassicaceae</taxon>
        <taxon>Crucihimalayeae</taxon>
        <taxon>Crucihimalaya</taxon>
    </lineage>
</organism>
<geneLocation type="chloroplast"/>
<keyword id="KW-0150">Chloroplast</keyword>
<keyword id="KW-0240">DNA-directed RNA polymerase</keyword>
<keyword id="KW-0548">Nucleotidyltransferase</keyword>
<keyword id="KW-0934">Plastid</keyword>
<keyword id="KW-0804">Transcription</keyword>
<keyword id="KW-0808">Transferase</keyword>
<accession>A4QKW3</accession>
<dbReference type="EC" id="2.7.7.6" evidence="1"/>
<dbReference type="EMBL" id="AP009372">
    <property type="protein sequence ID" value="BAF50318.1"/>
    <property type="molecule type" value="Genomic_DNA"/>
</dbReference>
<dbReference type="RefSeq" id="YP_001123494.1">
    <property type="nucleotide sequence ID" value="NC_009271.1"/>
</dbReference>
<dbReference type="SMR" id="A4QKW3"/>
<dbReference type="GeneID" id="4962667"/>
<dbReference type="GO" id="GO:0009507">
    <property type="term" value="C:chloroplast"/>
    <property type="evidence" value="ECO:0007669"/>
    <property type="project" value="UniProtKB-SubCell"/>
</dbReference>
<dbReference type="GO" id="GO:0000428">
    <property type="term" value="C:DNA-directed RNA polymerase complex"/>
    <property type="evidence" value="ECO:0007669"/>
    <property type="project" value="UniProtKB-KW"/>
</dbReference>
<dbReference type="GO" id="GO:0005739">
    <property type="term" value="C:mitochondrion"/>
    <property type="evidence" value="ECO:0007669"/>
    <property type="project" value="GOC"/>
</dbReference>
<dbReference type="GO" id="GO:0003677">
    <property type="term" value="F:DNA binding"/>
    <property type="evidence" value="ECO:0007669"/>
    <property type="project" value="UniProtKB-UniRule"/>
</dbReference>
<dbReference type="GO" id="GO:0003899">
    <property type="term" value="F:DNA-directed RNA polymerase activity"/>
    <property type="evidence" value="ECO:0007669"/>
    <property type="project" value="UniProtKB-UniRule"/>
</dbReference>
<dbReference type="GO" id="GO:0046983">
    <property type="term" value="F:protein dimerization activity"/>
    <property type="evidence" value="ECO:0007669"/>
    <property type="project" value="InterPro"/>
</dbReference>
<dbReference type="GO" id="GO:0006351">
    <property type="term" value="P:DNA-templated transcription"/>
    <property type="evidence" value="ECO:0007669"/>
    <property type="project" value="UniProtKB-UniRule"/>
</dbReference>
<dbReference type="CDD" id="cd06928">
    <property type="entry name" value="RNAP_alpha_NTD"/>
    <property type="match status" value="1"/>
</dbReference>
<dbReference type="FunFam" id="1.10.150.20:FF:000021">
    <property type="entry name" value="DNA-directed RNA polymerase subunit alpha"/>
    <property type="match status" value="1"/>
</dbReference>
<dbReference type="FunFam" id="2.170.120.12:FF:000001">
    <property type="entry name" value="DNA-directed RNA polymerase subunit alpha"/>
    <property type="match status" value="1"/>
</dbReference>
<dbReference type="FunFam" id="3.30.1360.10:FF:000039">
    <property type="entry name" value="DNA-directed RNA polymerase subunit alpha"/>
    <property type="match status" value="1"/>
</dbReference>
<dbReference type="Gene3D" id="1.10.150.20">
    <property type="entry name" value="5' to 3' exonuclease, C-terminal subdomain"/>
    <property type="match status" value="1"/>
</dbReference>
<dbReference type="Gene3D" id="2.170.120.12">
    <property type="entry name" value="DNA-directed RNA polymerase, insert domain"/>
    <property type="match status" value="1"/>
</dbReference>
<dbReference type="Gene3D" id="3.30.1360.10">
    <property type="entry name" value="RNA polymerase, RBP11-like subunit"/>
    <property type="match status" value="1"/>
</dbReference>
<dbReference type="HAMAP" id="MF_00059">
    <property type="entry name" value="RNApol_bact_RpoA"/>
    <property type="match status" value="1"/>
</dbReference>
<dbReference type="InterPro" id="IPR011262">
    <property type="entry name" value="DNA-dir_RNA_pol_insert"/>
</dbReference>
<dbReference type="InterPro" id="IPR011263">
    <property type="entry name" value="DNA-dir_RNA_pol_RpoA/D/Rpb3"/>
</dbReference>
<dbReference type="InterPro" id="IPR011773">
    <property type="entry name" value="DNA-dir_RpoA"/>
</dbReference>
<dbReference type="InterPro" id="IPR036603">
    <property type="entry name" value="RBP11-like"/>
</dbReference>
<dbReference type="InterPro" id="IPR011260">
    <property type="entry name" value="RNAP_asu_C"/>
</dbReference>
<dbReference type="InterPro" id="IPR036643">
    <property type="entry name" value="RNApol_insert_sf"/>
</dbReference>
<dbReference type="NCBIfam" id="TIGR02027">
    <property type="entry name" value="rpoA"/>
    <property type="match status" value="1"/>
</dbReference>
<dbReference type="Pfam" id="PF01000">
    <property type="entry name" value="RNA_pol_A_bac"/>
    <property type="match status" value="1"/>
</dbReference>
<dbReference type="Pfam" id="PF03118">
    <property type="entry name" value="RNA_pol_A_CTD"/>
    <property type="match status" value="1"/>
</dbReference>
<dbReference type="Pfam" id="PF01193">
    <property type="entry name" value="RNA_pol_L"/>
    <property type="match status" value="1"/>
</dbReference>
<dbReference type="SMART" id="SM00662">
    <property type="entry name" value="RPOLD"/>
    <property type="match status" value="1"/>
</dbReference>
<dbReference type="SUPFAM" id="SSF47789">
    <property type="entry name" value="C-terminal domain of RNA polymerase alpha subunit"/>
    <property type="match status" value="1"/>
</dbReference>
<dbReference type="SUPFAM" id="SSF56553">
    <property type="entry name" value="Insert subdomain of RNA polymerase alpha subunit"/>
    <property type="match status" value="1"/>
</dbReference>
<dbReference type="SUPFAM" id="SSF55257">
    <property type="entry name" value="RBP11-like subunits of RNA polymerase"/>
    <property type="match status" value="1"/>
</dbReference>